<proteinExistence type="evidence at protein level"/>
<evidence type="ECO:0000250" key="1"/>
<evidence type="ECO:0000250" key="2">
    <source>
        <dbReference type="UniProtKB" id="P35580"/>
    </source>
</evidence>
<evidence type="ECO:0000250" key="3">
    <source>
        <dbReference type="UniProtKB" id="Q9JLT0"/>
    </source>
</evidence>
<evidence type="ECO:0000255" key="4"/>
<evidence type="ECO:0000255" key="5">
    <source>
        <dbReference type="PROSITE-ProRule" id="PRU00116"/>
    </source>
</evidence>
<evidence type="ECO:0000255" key="6">
    <source>
        <dbReference type="PROSITE-ProRule" id="PRU00782"/>
    </source>
</evidence>
<evidence type="ECO:0000255" key="7">
    <source>
        <dbReference type="PROSITE-ProRule" id="PRU01190"/>
    </source>
</evidence>
<evidence type="ECO:0000256" key="8">
    <source>
        <dbReference type="SAM" id="MobiDB-lite"/>
    </source>
</evidence>
<evidence type="ECO:0000269" key="9">
    <source>
    </source>
</evidence>
<evidence type="ECO:0000269" key="10">
    <source>
    </source>
</evidence>
<evidence type="ECO:0000305" key="11"/>
<evidence type="ECO:0007744" key="12">
    <source>
    </source>
</evidence>
<evidence type="ECO:0007744" key="13">
    <source>
    </source>
</evidence>
<evidence type="ECO:0007744" key="14">
    <source>
    </source>
</evidence>
<evidence type="ECO:0007744" key="15">
    <source>
    </source>
</evidence>
<evidence type="ECO:0007744" key="16">
    <source>
    </source>
</evidence>
<evidence type="ECO:0007744" key="17">
    <source>
    </source>
</evidence>
<gene>
    <name type="primary">Myh10</name>
</gene>
<name>MYH10_MOUSE</name>
<organism>
    <name type="scientific">Mus musculus</name>
    <name type="common">Mouse</name>
    <dbReference type="NCBI Taxonomy" id="10090"/>
    <lineage>
        <taxon>Eukaryota</taxon>
        <taxon>Metazoa</taxon>
        <taxon>Chordata</taxon>
        <taxon>Craniata</taxon>
        <taxon>Vertebrata</taxon>
        <taxon>Euteleostomi</taxon>
        <taxon>Mammalia</taxon>
        <taxon>Eutheria</taxon>
        <taxon>Euarchontoglires</taxon>
        <taxon>Glires</taxon>
        <taxon>Rodentia</taxon>
        <taxon>Myomorpha</taxon>
        <taxon>Muroidea</taxon>
        <taxon>Muridae</taxon>
        <taxon>Murinae</taxon>
        <taxon>Mus</taxon>
        <taxon>Mus</taxon>
    </lineage>
</organism>
<comment type="function">
    <text evidence="1">Involved with LARP6 in the stabilization of type I collagen mRNAs for CO1A1 and CO1A2. During cell spreading, plays an important role in cytoskeleton reorganization, focal contacts formation (in the central part but not the margins of spreading cells), and lamellipodial extension; this function is mechanically antagonized by MYH9 (By similarity). Cellular myosin that appears to play a role in cytokinesis, cell shape, and specialized functions such as secretion and capping.</text>
</comment>
<comment type="subunit">
    <text evidence="2 10">Myosin is a hexameric protein that consists of 2 heavy chain subunits (MHC), 2 alkali light chain subunits (MLC) and 2 regulatory light chain subunits (MLC-2). Interacts with PLEKHG6 (By similarity). Interacts with ECPAS (By similarity). Interacts with LARP6 (By similarity). Interacts with MCC (By similarity). Interacts with KIF26B (PubMed:20439720). Interacts with CFAP95 (By similarity).</text>
</comment>
<comment type="interaction">
    <interactant intactId="EBI-400918">
        <id>Q61879</id>
    </interactant>
    <interactant intactId="EBI-15852098">
        <id>Q7TNC6</id>
        <label>Kif26b</label>
    </interactant>
    <organismsDiffer>false</organismsDiffer>
    <experiments>3</experiments>
</comment>
<comment type="subcellular location">
    <subcellularLocation>
        <location evidence="1">Cell projection</location>
        <location evidence="1">Lamellipodium</location>
    </subcellularLocation>
    <text evidence="1">Colocalizes with MCC at the leading edge of migrating cells.</text>
</comment>
<comment type="tissue specificity">
    <text evidence="10">In newborn kidney, expressed in the mesenchyme and ureteric buds.</text>
</comment>
<comment type="domain">
    <text>The rodlike tail sequence is highly repetitive, showing cycles of a 28-residue repeat pattern composed of 4 heptapeptides, characteristic for alpha-helical coiled coils.</text>
</comment>
<comment type="PTM">
    <text evidence="9">Phosphorylated by ABL2.</text>
</comment>
<comment type="similarity">
    <text evidence="11">Belongs to the TRAFAC class myosin-kinesin ATPase superfamily. Myosin family.</text>
</comment>
<comment type="caution">
    <text evidence="11">Represents a conventional non-muscle myosin. This protein should not be confused with the unconventional myosin-10 (MYO10).</text>
</comment>
<protein>
    <recommendedName>
        <fullName>Myosin-10</fullName>
    </recommendedName>
    <alternativeName>
        <fullName>Cellular myosin heavy chain, type B</fullName>
    </alternativeName>
    <alternativeName>
        <fullName>Myosin heavy chain 10</fullName>
    </alternativeName>
    <alternativeName>
        <fullName>Myosin heavy chain, non-muscle IIb</fullName>
    </alternativeName>
    <alternativeName>
        <fullName>Non-muscle myosin heavy chain B</fullName>
        <shortName>NMMHC-B</shortName>
    </alternativeName>
    <alternativeName>
        <fullName>Non-muscle myosin heavy chain IIb</fullName>
        <shortName>NMMHC II-b</shortName>
        <shortName>NMMHC-IIB</shortName>
    </alternativeName>
</protein>
<dbReference type="EMBL" id="AL603662">
    <property type="status" value="NOT_ANNOTATED_CDS"/>
    <property type="molecule type" value="Genomic_DNA"/>
</dbReference>
<dbReference type="EMBL" id="AL645644">
    <property type="status" value="NOT_ANNOTATED_CDS"/>
    <property type="molecule type" value="Genomic_DNA"/>
</dbReference>
<dbReference type="EMBL" id="BC089011">
    <property type="protein sequence ID" value="AAH89011.1"/>
    <property type="molecule type" value="mRNA"/>
</dbReference>
<dbReference type="EMBL" id="AH003264">
    <property type="protein sequence ID" value="AAA84879.1"/>
    <property type="molecule type" value="Genomic_DNA"/>
</dbReference>
<dbReference type="CCDS" id="CCDS24869.1"/>
<dbReference type="RefSeq" id="NP_780469.1">
    <property type="nucleotide sequence ID" value="NM_175260.2"/>
</dbReference>
<dbReference type="RefSeq" id="XP_036012983.1">
    <property type="nucleotide sequence ID" value="XM_036157090.1"/>
</dbReference>
<dbReference type="SMR" id="Q61879"/>
<dbReference type="BioGRID" id="218774">
    <property type="interactions" value="177"/>
</dbReference>
<dbReference type="CORUM" id="Q61879"/>
<dbReference type="DIP" id="DIP-31956N"/>
<dbReference type="FunCoup" id="Q61879">
    <property type="interactions" value="1542"/>
</dbReference>
<dbReference type="IntAct" id="Q61879">
    <property type="interactions" value="155"/>
</dbReference>
<dbReference type="MINT" id="Q61879"/>
<dbReference type="STRING" id="10090.ENSMUSP00000099671"/>
<dbReference type="GlyGen" id="Q61879">
    <property type="glycosylation" value="2 sites, 1 N-linked glycan (1 site), 1 O-linked glycan (1 site)"/>
</dbReference>
<dbReference type="iPTMnet" id="Q61879"/>
<dbReference type="PhosphoSitePlus" id="Q61879"/>
<dbReference type="SwissPalm" id="Q61879"/>
<dbReference type="jPOST" id="Q61879"/>
<dbReference type="PaxDb" id="10090-ENSMUSP00000099671"/>
<dbReference type="ProteomicsDB" id="287653"/>
<dbReference type="Pumba" id="Q61879"/>
<dbReference type="Antibodypedia" id="24686">
    <property type="antibodies" value="162 antibodies from 31 providers"/>
</dbReference>
<dbReference type="DNASU" id="77579"/>
<dbReference type="Ensembl" id="ENSMUST00000102611.10">
    <property type="protein sequence ID" value="ENSMUSP00000099671.4"/>
    <property type="gene ID" value="ENSMUSG00000020900.16"/>
</dbReference>
<dbReference type="GeneID" id="77579"/>
<dbReference type="KEGG" id="mmu:77579"/>
<dbReference type="UCSC" id="uc007jny.1">
    <property type="organism name" value="mouse"/>
</dbReference>
<dbReference type="AGR" id="MGI:1930780"/>
<dbReference type="CTD" id="4628"/>
<dbReference type="MGI" id="MGI:1930780">
    <property type="gene designation" value="Myh10"/>
</dbReference>
<dbReference type="VEuPathDB" id="HostDB:ENSMUSG00000020900"/>
<dbReference type="eggNOG" id="KOG0160">
    <property type="taxonomic scope" value="Eukaryota"/>
</dbReference>
<dbReference type="eggNOG" id="KOG0161">
    <property type="taxonomic scope" value="Eukaryota"/>
</dbReference>
<dbReference type="GeneTree" id="ENSGT00940000155159"/>
<dbReference type="HOGENOM" id="CLU_000192_4_4_1"/>
<dbReference type="InParanoid" id="Q61879"/>
<dbReference type="OrthoDB" id="10254995at2759"/>
<dbReference type="PhylomeDB" id="Q61879"/>
<dbReference type="TreeFam" id="TF333601"/>
<dbReference type="Reactome" id="R-MMU-5627123">
    <property type="pathway name" value="RHO GTPases activate PAKs"/>
</dbReference>
<dbReference type="BioGRID-ORCS" id="77579">
    <property type="hits" value="2 hits in 79 CRISPR screens"/>
</dbReference>
<dbReference type="CD-CODE" id="CE726F99">
    <property type="entry name" value="Postsynaptic density"/>
</dbReference>
<dbReference type="ChiTaRS" id="Myh10">
    <property type="organism name" value="mouse"/>
</dbReference>
<dbReference type="PRO" id="PR:Q61879"/>
<dbReference type="Proteomes" id="UP000000589">
    <property type="component" value="Chromosome 11"/>
</dbReference>
<dbReference type="RNAct" id="Q61879">
    <property type="molecule type" value="protein"/>
</dbReference>
<dbReference type="Bgee" id="ENSMUSG00000020900">
    <property type="expression patterns" value="Expressed in undifferentiated genital tubercle and 74 other cell types or tissues"/>
</dbReference>
<dbReference type="ExpressionAtlas" id="Q61879">
    <property type="expression patterns" value="baseline and differential"/>
</dbReference>
<dbReference type="GO" id="GO:0030424">
    <property type="term" value="C:axon"/>
    <property type="evidence" value="ECO:0000314"/>
    <property type="project" value="MGI"/>
</dbReference>
<dbReference type="GO" id="GO:0005903">
    <property type="term" value="C:brush border"/>
    <property type="evidence" value="ECO:0000314"/>
    <property type="project" value="UniProtKB"/>
</dbReference>
<dbReference type="GO" id="GO:0005938">
    <property type="term" value="C:cell cortex"/>
    <property type="evidence" value="ECO:0000314"/>
    <property type="project" value="MGI"/>
</dbReference>
<dbReference type="GO" id="GO:0009986">
    <property type="term" value="C:cell surface"/>
    <property type="evidence" value="ECO:0007669"/>
    <property type="project" value="Ensembl"/>
</dbReference>
<dbReference type="GO" id="GO:0032154">
    <property type="term" value="C:cleavage furrow"/>
    <property type="evidence" value="ECO:0007669"/>
    <property type="project" value="Ensembl"/>
</dbReference>
<dbReference type="GO" id="GO:0005737">
    <property type="term" value="C:cytoplasm"/>
    <property type="evidence" value="ECO:0000314"/>
    <property type="project" value="MGI"/>
</dbReference>
<dbReference type="GO" id="GO:0009898">
    <property type="term" value="C:cytoplasmic side of plasma membrane"/>
    <property type="evidence" value="ECO:0000314"/>
    <property type="project" value="MGI"/>
</dbReference>
<dbReference type="GO" id="GO:0005829">
    <property type="term" value="C:cytosol"/>
    <property type="evidence" value="ECO:0000304"/>
    <property type="project" value="Reactome"/>
</dbReference>
<dbReference type="GO" id="GO:0043197">
    <property type="term" value="C:dendritic spine"/>
    <property type="evidence" value="ECO:0000314"/>
    <property type="project" value="MGI"/>
</dbReference>
<dbReference type="GO" id="GO:0098978">
    <property type="term" value="C:glutamatergic synapse"/>
    <property type="evidence" value="ECO:0000314"/>
    <property type="project" value="SynGO"/>
</dbReference>
<dbReference type="GO" id="GO:0030426">
    <property type="term" value="C:growth cone"/>
    <property type="evidence" value="ECO:0000314"/>
    <property type="project" value="MGI"/>
</dbReference>
<dbReference type="GO" id="GO:0030027">
    <property type="term" value="C:lamellipodium"/>
    <property type="evidence" value="ECO:0007669"/>
    <property type="project" value="UniProtKB-SubCell"/>
</dbReference>
<dbReference type="GO" id="GO:0030496">
    <property type="term" value="C:midbody"/>
    <property type="evidence" value="ECO:0007669"/>
    <property type="project" value="Ensembl"/>
</dbReference>
<dbReference type="GO" id="GO:0016459">
    <property type="term" value="C:myosin complex"/>
    <property type="evidence" value="ECO:0000314"/>
    <property type="project" value="MGI"/>
</dbReference>
<dbReference type="GO" id="GO:0016460">
    <property type="term" value="C:myosin II complex"/>
    <property type="evidence" value="ECO:0000314"/>
    <property type="project" value="MGI"/>
</dbReference>
<dbReference type="GO" id="GO:0097513">
    <property type="term" value="C:myosin II filament"/>
    <property type="evidence" value="ECO:0007669"/>
    <property type="project" value="Ensembl"/>
</dbReference>
<dbReference type="GO" id="GO:0031594">
    <property type="term" value="C:neuromuscular junction"/>
    <property type="evidence" value="ECO:0000314"/>
    <property type="project" value="MGI"/>
</dbReference>
<dbReference type="GO" id="GO:0043005">
    <property type="term" value="C:neuron projection"/>
    <property type="evidence" value="ECO:0000314"/>
    <property type="project" value="MGI"/>
</dbReference>
<dbReference type="GO" id="GO:0043025">
    <property type="term" value="C:neuronal cell body"/>
    <property type="evidence" value="ECO:0000314"/>
    <property type="project" value="MGI"/>
</dbReference>
<dbReference type="GO" id="GO:0098871">
    <property type="term" value="C:postsynaptic actin cytoskeleton"/>
    <property type="evidence" value="ECO:0007669"/>
    <property type="project" value="Ensembl"/>
</dbReference>
<dbReference type="GO" id="GO:0016528">
    <property type="term" value="C:sarcoplasm"/>
    <property type="evidence" value="ECO:0000314"/>
    <property type="project" value="MGI"/>
</dbReference>
<dbReference type="GO" id="GO:0005819">
    <property type="term" value="C:spindle"/>
    <property type="evidence" value="ECO:0000314"/>
    <property type="project" value="MGI"/>
</dbReference>
<dbReference type="GO" id="GO:0001725">
    <property type="term" value="C:stress fiber"/>
    <property type="evidence" value="ECO:0000314"/>
    <property type="project" value="MGI"/>
</dbReference>
<dbReference type="GO" id="GO:0051015">
    <property type="term" value="F:actin filament binding"/>
    <property type="evidence" value="ECO:0000266"/>
    <property type="project" value="MGI"/>
</dbReference>
<dbReference type="GO" id="GO:0043531">
    <property type="term" value="F:ADP binding"/>
    <property type="evidence" value="ECO:0000266"/>
    <property type="project" value="MGI"/>
</dbReference>
<dbReference type="GO" id="GO:0005524">
    <property type="term" value="F:ATP binding"/>
    <property type="evidence" value="ECO:0000266"/>
    <property type="project" value="MGI"/>
</dbReference>
<dbReference type="GO" id="GO:0005516">
    <property type="term" value="F:calmodulin binding"/>
    <property type="evidence" value="ECO:0007669"/>
    <property type="project" value="UniProtKB-KW"/>
</dbReference>
<dbReference type="GO" id="GO:0000146">
    <property type="term" value="F:microfilament motor activity"/>
    <property type="evidence" value="ECO:0000266"/>
    <property type="project" value="MGI"/>
</dbReference>
<dbReference type="GO" id="GO:0048027">
    <property type="term" value="F:mRNA 5'-UTR binding"/>
    <property type="evidence" value="ECO:0007669"/>
    <property type="project" value="Ensembl"/>
</dbReference>
<dbReference type="GO" id="GO:0035613">
    <property type="term" value="F:RNA stem-loop binding"/>
    <property type="evidence" value="ECO:0007669"/>
    <property type="project" value="Ensembl"/>
</dbReference>
<dbReference type="GO" id="GO:0001618">
    <property type="term" value="F:virus receptor activity"/>
    <property type="evidence" value="ECO:0007669"/>
    <property type="project" value="Ensembl"/>
</dbReference>
<dbReference type="GO" id="GO:0030036">
    <property type="term" value="P:actin cytoskeleton organization"/>
    <property type="evidence" value="ECO:0000316"/>
    <property type="project" value="MGI"/>
</dbReference>
<dbReference type="GO" id="GO:0030048">
    <property type="term" value="P:actin filament-based movement"/>
    <property type="evidence" value="ECO:0000266"/>
    <property type="project" value="MGI"/>
</dbReference>
<dbReference type="GO" id="GO:0007512">
    <property type="term" value="P:adult heart development"/>
    <property type="evidence" value="ECO:0000315"/>
    <property type="project" value="MGI"/>
</dbReference>
<dbReference type="GO" id="GO:0035904">
    <property type="term" value="P:aorta development"/>
    <property type="evidence" value="ECO:0000315"/>
    <property type="project" value="MGI"/>
</dbReference>
<dbReference type="GO" id="GO:0007411">
    <property type="term" value="P:axon guidance"/>
    <property type="evidence" value="ECO:0000315"/>
    <property type="project" value="MGI"/>
</dbReference>
<dbReference type="GO" id="GO:0007409">
    <property type="term" value="P:axonogenesis"/>
    <property type="evidence" value="ECO:0000315"/>
    <property type="project" value="MGI"/>
</dbReference>
<dbReference type="GO" id="GO:0007420">
    <property type="term" value="P:brain development"/>
    <property type="evidence" value="ECO:0000315"/>
    <property type="project" value="MGI"/>
</dbReference>
<dbReference type="GO" id="GO:0060038">
    <property type="term" value="P:cardiac muscle cell proliferation"/>
    <property type="evidence" value="ECO:0000315"/>
    <property type="project" value="MGI"/>
</dbReference>
<dbReference type="GO" id="GO:0055003">
    <property type="term" value="P:cardiac myofibril assembly"/>
    <property type="evidence" value="ECO:0000315"/>
    <property type="project" value="MGI"/>
</dbReference>
<dbReference type="GO" id="GO:0003279">
    <property type="term" value="P:cardiac septum development"/>
    <property type="evidence" value="ECO:0000315"/>
    <property type="project" value="MGI"/>
</dbReference>
<dbReference type="GO" id="GO:0007155">
    <property type="term" value="P:cell adhesion"/>
    <property type="evidence" value="ECO:0007669"/>
    <property type="project" value="UniProtKB-KW"/>
</dbReference>
<dbReference type="GO" id="GO:0021680">
    <property type="term" value="P:cerebellar Purkinje cell layer development"/>
    <property type="evidence" value="ECO:0000315"/>
    <property type="project" value="MGI"/>
</dbReference>
<dbReference type="GO" id="GO:0060976">
    <property type="term" value="P:coronary vasculature development"/>
    <property type="evidence" value="ECO:0000315"/>
    <property type="project" value="MGI"/>
</dbReference>
<dbReference type="GO" id="GO:0006887">
    <property type="term" value="P:exocytosis"/>
    <property type="evidence" value="ECO:0000315"/>
    <property type="project" value="MGI"/>
</dbReference>
<dbReference type="GO" id="GO:0021592">
    <property type="term" value="P:fourth ventricle development"/>
    <property type="evidence" value="ECO:0000315"/>
    <property type="project" value="MGI"/>
</dbReference>
<dbReference type="GO" id="GO:0007507">
    <property type="term" value="P:heart development"/>
    <property type="evidence" value="ECO:0000315"/>
    <property type="project" value="MGI"/>
</dbReference>
<dbReference type="GO" id="GO:0001701">
    <property type="term" value="P:in utero embryonic development"/>
    <property type="evidence" value="ECO:0000315"/>
    <property type="project" value="MGI"/>
</dbReference>
<dbReference type="GO" id="GO:0021670">
    <property type="term" value="P:lateral ventricle development"/>
    <property type="evidence" value="ECO:0000315"/>
    <property type="project" value="MGI"/>
</dbReference>
<dbReference type="GO" id="GO:0000281">
    <property type="term" value="P:mitotic cytokinesis"/>
    <property type="evidence" value="ECO:0000315"/>
    <property type="project" value="MGI"/>
</dbReference>
<dbReference type="GO" id="GO:0030239">
    <property type="term" value="P:myofibril assembly"/>
    <property type="evidence" value="ECO:0000315"/>
    <property type="project" value="MGI"/>
</dbReference>
<dbReference type="GO" id="GO:0050885">
    <property type="term" value="P:neuromuscular process controlling balance"/>
    <property type="evidence" value="ECO:0000315"/>
    <property type="project" value="MGI"/>
</dbReference>
<dbReference type="GO" id="GO:0001764">
    <property type="term" value="P:neuron migration"/>
    <property type="evidence" value="ECO:0000315"/>
    <property type="project" value="MGI"/>
</dbReference>
<dbReference type="GO" id="GO:0031175">
    <property type="term" value="P:neuron projection development"/>
    <property type="evidence" value="ECO:0000315"/>
    <property type="project" value="MGI"/>
</dbReference>
<dbReference type="GO" id="GO:0007097">
    <property type="term" value="P:nuclear migration"/>
    <property type="evidence" value="ECO:0000315"/>
    <property type="project" value="MGI"/>
</dbReference>
<dbReference type="GO" id="GO:0001778">
    <property type="term" value="P:plasma membrane repair"/>
    <property type="evidence" value="ECO:0000315"/>
    <property type="project" value="MGI"/>
</dbReference>
<dbReference type="GO" id="GO:0050714">
    <property type="term" value="P:positive regulation of protein secretion"/>
    <property type="evidence" value="ECO:0007669"/>
    <property type="project" value="Ensembl"/>
</dbReference>
<dbReference type="GO" id="GO:0098974">
    <property type="term" value="P:postsynaptic actin cytoskeleton organization"/>
    <property type="evidence" value="ECO:0000314"/>
    <property type="project" value="SynGO"/>
</dbReference>
<dbReference type="GO" id="GO:0008360">
    <property type="term" value="P:regulation of cell shape"/>
    <property type="evidence" value="ECO:0000315"/>
    <property type="project" value="MGI"/>
</dbReference>
<dbReference type="GO" id="GO:0060041">
    <property type="term" value="P:retina development in camera-type eye"/>
    <property type="evidence" value="ECO:0000315"/>
    <property type="project" value="MGI"/>
</dbReference>
<dbReference type="GO" id="GO:0006930">
    <property type="term" value="P:substrate-dependent cell migration, cell extension"/>
    <property type="evidence" value="ECO:0000315"/>
    <property type="project" value="MGI"/>
</dbReference>
<dbReference type="GO" id="GO:0021678">
    <property type="term" value="P:third ventricle development"/>
    <property type="evidence" value="ECO:0000315"/>
    <property type="project" value="MGI"/>
</dbReference>
<dbReference type="GO" id="GO:0055015">
    <property type="term" value="P:ventricular cardiac muscle cell development"/>
    <property type="evidence" value="ECO:0000315"/>
    <property type="project" value="MGI"/>
</dbReference>
<dbReference type="CDD" id="cd14920">
    <property type="entry name" value="MYSc_Myh10"/>
    <property type="match status" value="1"/>
</dbReference>
<dbReference type="FunFam" id="2.30.30.360:FF:000001">
    <property type="entry name" value="Myosin heavy chain"/>
    <property type="match status" value="1"/>
</dbReference>
<dbReference type="FunFam" id="1.10.10.820:FF:000002">
    <property type="entry name" value="Myosin heavy chain 10"/>
    <property type="match status" value="1"/>
</dbReference>
<dbReference type="FunFam" id="1.20.120.720:FF:000002">
    <property type="entry name" value="Myosin heavy chain 10"/>
    <property type="match status" value="1"/>
</dbReference>
<dbReference type="FunFam" id="1.20.5.4820:FF:000002">
    <property type="entry name" value="Myosin heavy chain 10"/>
    <property type="match status" value="1"/>
</dbReference>
<dbReference type="FunFam" id="1.20.58.530:FF:000003">
    <property type="entry name" value="Myosin heavy chain 10"/>
    <property type="match status" value="1"/>
</dbReference>
<dbReference type="FunFam" id="1.20.5.340:FF:000008">
    <property type="entry name" value="Myosin heavy chain 11"/>
    <property type="match status" value="1"/>
</dbReference>
<dbReference type="FunFam" id="1.20.5.340:FF:000007">
    <property type="entry name" value="Myosin heavy chain, non-muscle"/>
    <property type="match status" value="1"/>
</dbReference>
<dbReference type="FunFam" id="1.20.5.340:FF:000017">
    <property type="entry name" value="myosin-10 isoform X2"/>
    <property type="match status" value="1"/>
</dbReference>
<dbReference type="FunFam" id="1.20.5.340:FF:000009">
    <property type="entry name" value="myosin-11 isoform X2"/>
    <property type="match status" value="1"/>
</dbReference>
<dbReference type="FunFam" id="3.40.850.10:FF:000101">
    <property type="entry name" value="Slow myosin heavy chain 2"/>
    <property type="match status" value="1"/>
</dbReference>
<dbReference type="Gene3D" id="1.10.10.820">
    <property type="match status" value="1"/>
</dbReference>
<dbReference type="Gene3D" id="1.10.287.1490">
    <property type="match status" value="1"/>
</dbReference>
<dbReference type="Gene3D" id="1.20.5.340">
    <property type="match status" value="5"/>
</dbReference>
<dbReference type="Gene3D" id="1.20.5.4820">
    <property type="match status" value="1"/>
</dbReference>
<dbReference type="Gene3D" id="1.20.58.530">
    <property type="match status" value="1"/>
</dbReference>
<dbReference type="Gene3D" id="6.10.250.2420">
    <property type="match status" value="1"/>
</dbReference>
<dbReference type="Gene3D" id="3.40.850.10">
    <property type="entry name" value="Kinesin motor domain"/>
    <property type="match status" value="1"/>
</dbReference>
<dbReference type="Gene3D" id="2.30.30.360">
    <property type="entry name" value="Myosin S1 fragment, N-terminal"/>
    <property type="match status" value="1"/>
</dbReference>
<dbReference type="Gene3D" id="1.20.120.720">
    <property type="entry name" value="Myosin VI head, motor domain, U50 subdomain"/>
    <property type="match status" value="1"/>
</dbReference>
<dbReference type="InterPro" id="IPR000048">
    <property type="entry name" value="IQ_motif_EF-hand-BS"/>
</dbReference>
<dbReference type="InterPro" id="IPR036961">
    <property type="entry name" value="Kinesin_motor_dom_sf"/>
</dbReference>
<dbReference type="InterPro" id="IPR001609">
    <property type="entry name" value="Myosin_head_motor_dom-like"/>
</dbReference>
<dbReference type="InterPro" id="IPR004009">
    <property type="entry name" value="Myosin_N"/>
</dbReference>
<dbReference type="InterPro" id="IPR008989">
    <property type="entry name" value="Myosin_S1_N"/>
</dbReference>
<dbReference type="InterPro" id="IPR002928">
    <property type="entry name" value="Myosin_tail"/>
</dbReference>
<dbReference type="InterPro" id="IPR027417">
    <property type="entry name" value="P-loop_NTPase"/>
</dbReference>
<dbReference type="PANTHER" id="PTHR45615">
    <property type="entry name" value="MYOSIN HEAVY CHAIN, NON-MUSCLE"/>
    <property type="match status" value="1"/>
</dbReference>
<dbReference type="PANTHER" id="PTHR45615:SF40">
    <property type="entry name" value="MYOSIN HEAVY CHAIN, NON-MUSCLE"/>
    <property type="match status" value="1"/>
</dbReference>
<dbReference type="Pfam" id="PF00612">
    <property type="entry name" value="IQ"/>
    <property type="match status" value="1"/>
</dbReference>
<dbReference type="Pfam" id="PF00063">
    <property type="entry name" value="Myosin_head"/>
    <property type="match status" value="1"/>
</dbReference>
<dbReference type="Pfam" id="PF02736">
    <property type="entry name" value="Myosin_N"/>
    <property type="match status" value="1"/>
</dbReference>
<dbReference type="Pfam" id="PF01576">
    <property type="entry name" value="Myosin_tail_1"/>
    <property type="match status" value="1"/>
</dbReference>
<dbReference type="PRINTS" id="PR00193">
    <property type="entry name" value="MYOSINHEAVY"/>
</dbReference>
<dbReference type="SMART" id="SM00015">
    <property type="entry name" value="IQ"/>
    <property type="match status" value="1"/>
</dbReference>
<dbReference type="SMART" id="SM00242">
    <property type="entry name" value="MYSc"/>
    <property type="match status" value="1"/>
</dbReference>
<dbReference type="SUPFAM" id="SSF90257">
    <property type="entry name" value="Myosin rod fragments"/>
    <property type="match status" value="6"/>
</dbReference>
<dbReference type="SUPFAM" id="SSF50084">
    <property type="entry name" value="Myosin S1 fragment, N-terminal domain"/>
    <property type="match status" value="1"/>
</dbReference>
<dbReference type="SUPFAM" id="SSF52540">
    <property type="entry name" value="P-loop containing nucleoside triphosphate hydrolases"/>
    <property type="match status" value="1"/>
</dbReference>
<dbReference type="PROSITE" id="PS50096">
    <property type="entry name" value="IQ"/>
    <property type="match status" value="1"/>
</dbReference>
<dbReference type="PROSITE" id="PS51456">
    <property type="entry name" value="MYOSIN_MOTOR"/>
    <property type="match status" value="1"/>
</dbReference>
<dbReference type="PROSITE" id="PS51844">
    <property type="entry name" value="SH3_LIKE"/>
    <property type="match status" value="1"/>
</dbReference>
<accession>Q61879</accession>
<accession>Q5SV63</accession>
<feature type="chain" id="PRO_0000123422" description="Myosin-10">
    <location>
        <begin position="1"/>
        <end position="1976"/>
    </location>
</feature>
<feature type="domain" description="Myosin N-terminal SH3-like" evidence="7">
    <location>
        <begin position="31"/>
        <end position="81"/>
    </location>
</feature>
<feature type="domain" description="Myosin motor" evidence="6">
    <location>
        <begin position="85"/>
        <end position="783"/>
    </location>
</feature>
<feature type="domain" description="IQ" evidence="5">
    <location>
        <begin position="786"/>
        <end position="815"/>
    </location>
</feature>
<feature type="region of interest" description="Actin-binding" evidence="6">
    <location>
        <begin position="661"/>
        <end position="683"/>
    </location>
</feature>
<feature type="region of interest" description="Disordered" evidence="8">
    <location>
        <begin position="1125"/>
        <end position="1175"/>
    </location>
</feature>
<feature type="region of interest" description="Disordered" evidence="8">
    <location>
        <begin position="1697"/>
        <end position="1718"/>
    </location>
</feature>
<feature type="region of interest" description="Disordered" evidence="8">
    <location>
        <begin position="1874"/>
        <end position="1976"/>
    </location>
</feature>
<feature type="coiled-coil region" evidence="4">
    <location>
        <begin position="845"/>
        <end position="1976"/>
    </location>
</feature>
<feature type="compositionally biased region" description="Basic and acidic residues" evidence="8">
    <location>
        <begin position="1129"/>
        <end position="1155"/>
    </location>
</feature>
<feature type="compositionally biased region" description="Basic and acidic residues" evidence="8">
    <location>
        <begin position="1698"/>
        <end position="1708"/>
    </location>
</feature>
<feature type="compositionally biased region" description="Polar residues" evidence="8">
    <location>
        <begin position="1967"/>
        <end position="1976"/>
    </location>
</feature>
<feature type="binding site" evidence="4">
    <location>
        <begin position="178"/>
        <end position="185"/>
    </location>
    <ligand>
        <name>ATP</name>
        <dbReference type="ChEBI" id="CHEBI:30616"/>
    </ligand>
</feature>
<feature type="modified residue" description="Omega-N-methylarginine" evidence="17">
    <location>
        <position position="18"/>
    </location>
</feature>
<feature type="modified residue" description="N6-acetyllysine" evidence="2">
    <location>
        <position position="442"/>
    </location>
</feature>
<feature type="modified residue" description="Phosphoserine" evidence="2">
    <location>
        <position position="1145"/>
    </location>
</feature>
<feature type="modified residue" description="N6-acetyllysine" evidence="16">
    <location>
        <position position="1241"/>
    </location>
</feature>
<feature type="modified residue" description="N6-acetyllysine" evidence="16">
    <location>
        <position position="1301"/>
    </location>
</feature>
<feature type="modified residue" description="N6-acetyllysine" evidence="2">
    <location>
        <position position="1645"/>
    </location>
</feature>
<feature type="modified residue" description="Omega-N-methylarginine" evidence="17">
    <location>
        <position position="1930"/>
    </location>
</feature>
<feature type="modified residue" description="Phosphoserine" evidence="2">
    <location>
        <position position="1935"/>
    </location>
</feature>
<feature type="modified residue" description="Phosphoserine" evidence="2">
    <location>
        <position position="1937"/>
    </location>
</feature>
<feature type="modified residue" description="Phosphoserine" evidence="2">
    <location>
        <position position="1938"/>
    </location>
</feature>
<feature type="modified residue" description="Phosphoserine" evidence="15">
    <location>
        <position position="1939"/>
    </location>
</feature>
<feature type="modified residue" description="Omega-N-methylarginine" evidence="17">
    <location>
        <position position="1940"/>
    </location>
</feature>
<feature type="modified residue" description="Phosphoserine" evidence="12 13 15">
    <location>
        <position position="1952"/>
    </location>
</feature>
<feature type="modified residue" description="Phosphoserine" evidence="12 13 14 15">
    <location>
        <position position="1956"/>
    </location>
</feature>
<feature type="modified residue" description="Phosphothreonine" evidence="2">
    <location>
        <position position="1960"/>
    </location>
</feature>
<feature type="modified residue" description="Phosphoserine" evidence="3">
    <location>
        <position position="1975"/>
    </location>
</feature>
<reference key="1">
    <citation type="journal article" date="2004" name="Genome Res.">
        <title>The status, quality, and expansion of the NIH full-length cDNA project: the Mammalian Gene Collection (MGC).</title>
        <authorList>
            <consortium name="The MGC Project Team"/>
        </authorList>
    </citation>
    <scope>NUCLEOTIDE SEQUENCE [LARGE SCALE MRNA]</scope>
    <source>
        <strain>C57BL/6J</strain>
        <tissue>Brain</tissue>
    </source>
</reference>
<reference key="2">
    <citation type="journal article" date="2009" name="PLoS Biol.">
        <title>Lineage-specific biology revealed by a finished genome assembly of the mouse.</title>
        <authorList>
            <person name="Church D.M."/>
            <person name="Goodstadt L."/>
            <person name="Hillier L.W."/>
            <person name="Zody M.C."/>
            <person name="Goldstein S."/>
            <person name="She X."/>
            <person name="Bult C.J."/>
            <person name="Agarwala R."/>
            <person name="Cherry J.L."/>
            <person name="DiCuccio M."/>
            <person name="Hlavina W."/>
            <person name="Kapustin Y."/>
            <person name="Meric P."/>
            <person name="Maglott D."/>
            <person name="Birtle Z."/>
            <person name="Marques A.C."/>
            <person name="Graves T."/>
            <person name="Zhou S."/>
            <person name="Teague B."/>
            <person name="Potamousis K."/>
            <person name="Churas C."/>
            <person name="Place M."/>
            <person name="Herschleb J."/>
            <person name="Runnheim R."/>
            <person name="Forrest D."/>
            <person name="Amos-Landgraf J."/>
            <person name="Schwartz D.C."/>
            <person name="Cheng Z."/>
            <person name="Lindblad-Toh K."/>
            <person name="Eichler E.E."/>
            <person name="Ponting C.P."/>
        </authorList>
    </citation>
    <scope>NUCLEOTIDE SEQUENCE [LARGE SCALE GENOMIC DNA]</scope>
    <source>
        <strain>C57BL/6J</strain>
    </source>
</reference>
<reference key="3">
    <citation type="journal article" date="1996" name="Gene Expr.">
        <title>Characterization of the nonmuscle myosin heavy chain IIB promoter: regulation by E2F.</title>
        <authorList>
            <person name="Weir L."/>
            <person name="Chen D."/>
        </authorList>
    </citation>
    <scope>NUCLEOTIDE SEQUENCE [GENOMIC DNA] OF 1-115</scope>
</reference>
<reference key="4">
    <citation type="journal article" date="2006" name="Mol. Cell. Proteomics">
        <title>Comprehensive identification of phosphorylation sites in postsynaptic density preparations.</title>
        <authorList>
            <person name="Trinidad J.C."/>
            <person name="Specht C.G."/>
            <person name="Thalhammer A."/>
            <person name="Schoepfer R."/>
            <person name="Burlingame A.L."/>
        </authorList>
    </citation>
    <scope>PHOSPHORYLATION [LARGE SCALE ANALYSIS] AT SER-1952 AND SER-1956</scope>
    <scope>IDENTIFICATION BY MASS SPECTROMETRY [LARGE SCALE ANALYSIS]</scope>
    <source>
        <tissue>Brain</tissue>
    </source>
</reference>
<reference key="5">
    <citation type="journal article" date="2007" name="Biochemistry">
        <title>Use of a chemical genetic technique to identify myosin IIb as a substrate of the Abl-related gene (Arg) tyrosine kinase.</title>
        <authorList>
            <person name="Boyle S.N."/>
            <person name="Koleske A.J."/>
        </authorList>
    </citation>
    <scope>PHOSPHORYLATION</scope>
</reference>
<reference key="6">
    <citation type="journal article" date="2007" name="Proc. Natl. Acad. Sci. U.S.A.">
        <title>Large-scale phosphorylation analysis of mouse liver.</title>
        <authorList>
            <person name="Villen J."/>
            <person name="Beausoleil S.A."/>
            <person name="Gerber S.A."/>
            <person name="Gygi S.P."/>
        </authorList>
    </citation>
    <scope>PHOSPHORYLATION [LARGE SCALE ANALYSIS] AT SER-1952 AND SER-1956</scope>
    <scope>IDENTIFICATION BY MASS SPECTROMETRY [LARGE SCALE ANALYSIS]</scope>
    <source>
        <tissue>Liver</tissue>
    </source>
</reference>
<reference key="7">
    <citation type="journal article" date="2009" name="Mol. Cell. Proteomics">
        <title>Large scale localization of protein phosphorylation by use of electron capture dissociation mass spectrometry.</title>
        <authorList>
            <person name="Sweet S.M."/>
            <person name="Bailey C.M."/>
            <person name="Cunningham D.L."/>
            <person name="Heath J.K."/>
            <person name="Cooper H.J."/>
        </authorList>
    </citation>
    <scope>PHOSPHORYLATION [LARGE SCALE ANALYSIS] AT SER-1956</scope>
    <scope>IDENTIFICATION BY MASS SPECTROMETRY [LARGE SCALE ANALYSIS]</scope>
    <source>
        <tissue>Embryonic fibroblast</tissue>
    </source>
</reference>
<reference key="8">
    <citation type="journal article" date="2010" name="Cell">
        <title>A tissue-specific atlas of mouse protein phosphorylation and expression.</title>
        <authorList>
            <person name="Huttlin E.L."/>
            <person name="Jedrychowski M.P."/>
            <person name="Elias J.E."/>
            <person name="Goswami T."/>
            <person name="Rad R."/>
            <person name="Beausoleil S.A."/>
            <person name="Villen J."/>
            <person name="Haas W."/>
            <person name="Sowa M.E."/>
            <person name="Gygi S.P."/>
        </authorList>
    </citation>
    <scope>PHOSPHORYLATION [LARGE SCALE ANALYSIS] AT SER-1939; SER-1952 AND SER-1956</scope>
    <scope>IDENTIFICATION BY MASS SPECTROMETRY [LARGE SCALE ANALYSIS]</scope>
    <source>
        <tissue>Brain</tissue>
        <tissue>Brown adipose tissue</tissue>
        <tissue>Heart</tissue>
        <tissue>Kidney</tissue>
        <tissue>Liver</tissue>
        <tissue>Lung</tissue>
        <tissue>Pancreas</tissue>
        <tissue>Spleen</tissue>
        <tissue>Testis</tissue>
    </source>
</reference>
<reference key="9">
    <citation type="journal article" date="2010" name="Proc. Natl. Acad. Sci. U.S.A.">
        <title>Kif26b, a kinesin family gene, regulates adhesion of the embryonic kidney mesenchyme.</title>
        <authorList>
            <person name="Uchiyama Y."/>
            <person name="Sakaguchi M."/>
            <person name="Terabayashi T."/>
            <person name="Inenaga T."/>
            <person name="Inoue S."/>
            <person name="Kobayashi C."/>
            <person name="Oshima N."/>
            <person name="Kiyonari H."/>
            <person name="Nakagata N."/>
            <person name="Sato Y."/>
            <person name="Sekiguchi K."/>
            <person name="Miki H."/>
            <person name="Araki E."/>
            <person name="Fujimura S."/>
            <person name="Tanaka S.S."/>
            <person name="Nishinakamura R."/>
        </authorList>
    </citation>
    <scope>INTERACTION WITH KIF26B</scope>
    <scope>TISSUE SPECIFICITY</scope>
</reference>
<reference key="10">
    <citation type="journal article" date="2013" name="Mol. Cell">
        <title>SIRT5-mediated lysine desuccinylation impacts diverse metabolic pathways.</title>
        <authorList>
            <person name="Park J."/>
            <person name="Chen Y."/>
            <person name="Tishkoff D.X."/>
            <person name="Peng C."/>
            <person name="Tan M."/>
            <person name="Dai L."/>
            <person name="Xie Z."/>
            <person name="Zhang Y."/>
            <person name="Zwaans B.M."/>
            <person name="Skinner M.E."/>
            <person name="Lombard D.B."/>
            <person name="Zhao Y."/>
        </authorList>
    </citation>
    <scope>ACETYLATION [LARGE SCALE ANALYSIS] AT LYS-1241 AND LYS-1301</scope>
    <scope>IDENTIFICATION BY MASS SPECTROMETRY [LARGE SCALE ANALYSIS]</scope>
    <source>
        <tissue>Embryonic fibroblast</tissue>
    </source>
</reference>
<reference key="11">
    <citation type="journal article" date="2014" name="Mol. Cell. Proteomics">
        <title>Immunoaffinity enrichment and mass spectrometry analysis of protein methylation.</title>
        <authorList>
            <person name="Guo A."/>
            <person name="Gu H."/>
            <person name="Zhou J."/>
            <person name="Mulhern D."/>
            <person name="Wang Y."/>
            <person name="Lee K.A."/>
            <person name="Yang V."/>
            <person name="Aguiar M."/>
            <person name="Kornhauser J."/>
            <person name="Jia X."/>
            <person name="Ren J."/>
            <person name="Beausoleil S.A."/>
            <person name="Silva J.C."/>
            <person name="Vemulapalli V."/>
            <person name="Bedford M.T."/>
            <person name="Comb M.J."/>
        </authorList>
    </citation>
    <scope>METHYLATION [LARGE SCALE ANALYSIS] AT ARG-18; ARG-1930 AND ARG-1940</scope>
    <scope>IDENTIFICATION BY MASS SPECTROMETRY [LARGE SCALE ANALYSIS]</scope>
    <source>
        <tissue>Brain</tissue>
        <tissue>Embryo</tissue>
    </source>
</reference>
<sequence>MAQRTGLEDPERYLFVDRAVIYNPATQADWTAKKLVWIPSERHGFEAASIKEERGDEVMVELAENGKKAMVNKDDIQKMNPPKFSKVEDMAELTCLNEASVLHNLKDRYYSGLIYTYSGLFCVVINPYKNLPIYSENIIEMYRGKKRHEMPPHIYAISESAYRCMLQDREDQSILCTGESGAGKTENTKKVIQYLAHVASSHKGRKDHNIPGELERQLLQANPILESFGNAKTVKNDNSSRFGKFIRINFDVTGYIVGANIETYLLEKSRAVRQAKDERTFHIFYQLLSGAGEHLKSDLLLEGFNNYRFLSNGYIPIPGQQDKDNFQETMEAMHIMGFSHEEILSMLKVVSSVLQFGNISFKKERNTDQASMPENTVAQKLCHLLGMNVMEFTRAILTPRIKVGRDYVQKAQTKEQADFAVEALAKATYERLFRWLVHRINKALDRTKRQGASFIGILDIAGFEIFELNSFEQLCINYTNEKLQQLFNHTMFILEQEEYQREGIEWNFIDFGLDLQPCIDLIERPANPPGVLALLDEECWFPKATDKTFVEKLVQEQGSHSKFQKPRQLKDKADFCIIHYAGKVDYKADEWLMKNMDPLNDNVATLLHQSSDRFVAELWKDVDRIVGLDQVTGMTETAFGSAYKTKKGMFRTVGQLYKESLTKLMATLRNTNPNFVRCIIPNHEKRAGKLDPHLVLDQLRCNGVLEGIRICRQGFPNRIVFQEFRQRYEILTPNAIPKGFMDGKQACERMIRALELDPNLYRIGQSKIFFRAGVLAHLEEERDLKITDIIIFFQAVCRGYLARKAFAKKQQQLSALKVLQRNCAAYLKLRHWQWWRVFTKVKPLLQVTRQEEELQAKDEELLKVKEKQTKVEGELEEMERKHQQLLEEKNILAEQLQAETELFAEAEEMRARLAAKKQELEEILHDLESRVEEEEERNQILQNEKKKMQAHIQDLEEQLDEEEGARQKLQLEKVTAEAKIKKMEEEVLLLEDQNSKFIKEKKLMEDRIAECSSQLAEEEEKAKNLAKIRNKQEVMISDLEERLKKEEKTRQELEKAKRKLDGETTDLQDQIAELQAQVDELKVQLTKKEEELQGALARGDDETLHKNNALKVARELQAQIAELQEDFESEKASRNKAEKQKRDLSEELEALKTELEDTLDTTAAQQELRTKREQEVAELKKALEDETKNHEAQIQDMRQRHATALEELSEQLEQAKRFKANLEKNKQGLETDNKELACEVKVLQQVKAESEHKRKKLDAQVQELHAKVSEGDRLRVELAEKANKLQNELDNVSTLLEEAEKKGIKFAKDAAGLESQLQDTQELLQEETRQKLNLSSRIRQLEEEKNSLQEQQEEEEEARKNLEKQVLALQSQLADTKKKVDDDLGTIESLEEAKKKLLKDVEALSQRLEEKVLAYDKLEKTKNRLQQELDDLTVDLDHQRQIVSNLEKKQKKFDQLLAEEKGISARYAEERDRAEAEAREKETKALSLARALEEALEAKEEFERQNKQLRADMEDLMSSKDDVGKNVHELEKSKRALEQQVEEMRTQLEELEDELQATEDAKLRLEVNMQAMKAQFERDLQTRDEQNEEKKRLLLKQVRELEAELEDERKQRALAVASKKKMEIDLKDLEAQIEAANKARDEVIKQLRKLQAQMKDYQRELEEARASRDEIFAQSKESEKKLKSLEAEILQLQEELASSERARRHAEQERDELADEIANSASGKSALLDEKRRLEARIAQLEEELEEEQSNMELLNDRFRKTTLQVDTLNTELAAERSAAQKSDNARQQLERQNKELKAKLQELEGAVKSKFKATISALEAKIGQLEEQLEQEAKERAAANKLVRRTEKKLKEIFMQVEDERRHADQYKEQMEKANARMKQLKRQLEEAEEEATRANASRRKLQRELDDATEANEGLSREVSTLKNRLRRGGPISFSSSRSGRRQLHIEGASLELSDDDTESKTSDVNDTQPPQSE</sequence>
<keyword id="KW-0007">Acetylation</keyword>
<keyword id="KW-0009">Actin-binding</keyword>
<keyword id="KW-0067">ATP-binding</keyword>
<keyword id="KW-0112">Calmodulin-binding</keyword>
<keyword id="KW-0130">Cell adhesion</keyword>
<keyword id="KW-0966">Cell projection</keyword>
<keyword id="KW-0133">Cell shape</keyword>
<keyword id="KW-0175">Coiled coil</keyword>
<keyword id="KW-0488">Methylation</keyword>
<keyword id="KW-0505">Motor protein</keyword>
<keyword id="KW-0518">Myosin</keyword>
<keyword id="KW-0547">Nucleotide-binding</keyword>
<keyword id="KW-0597">Phosphoprotein</keyword>
<keyword id="KW-1185">Reference proteome</keyword>